<geneLocation type="plasmid">
    <name>pHM300</name>
</geneLocation>
<dbReference type="EC" id="1.7.5.1" evidence="4"/>
<dbReference type="EMBL" id="AJ621881">
    <property type="protein sequence ID" value="CAF21907.1"/>
    <property type="molecule type" value="Genomic_DNA"/>
</dbReference>
<dbReference type="EMBL" id="CP001870">
    <property type="protein sequence ID" value="AFK20938.1"/>
    <property type="molecule type" value="Genomic_DNA"/>
</dbReference>
<dbReference type="EMBL" id="AOLO01000001">
    <property type="protein sequence ID" value="EMA05272.1"/>
    <property type="molecule type" value="Genomic_DNA"/>
</dbReference>
<dbReference type="RefSeq" id="WP_004056335.1">
    <property type="nucleotide sequence ID" value="NC_017943.1"/>
</dbReference>
<dbReference type="SMR" id="I3R9M8"/>
<dbReference type="GeneID" id="40158239"/>
<dbReference type="KEGG" id="hme:HFX_5103"/>
<dbReference type="HOGENOM" id="CLU_043374_5_2_2"/>
<dbReference type="OrthoDB" id="2837at2157"/>
<dbReference type="BRENDA" id="1.7.7.2">
    <property type="organism ID" value="2566"/>
</dbReference>
<dbReference type="BRENDA" id="1.97.1.1">
    <property type="organism ID" value="2566"/>
</dbReference>
<dbReference type="Proteomes" id="UP000006469">
    <property type="component" value="Plasmid pHM300"/>
</dbReference>
<dbReference type="Proteomes" id="UP000011603">
    <property type="component" value="Unassembled WGS sequence"/>
</dbReference>
<dbReference type="GO" id="GO:0042597">
    <property type="term" value="C:periplasmic space"/>
    <property type="evidence" value="ECO:0007669"/>
    <property type="project" value="InterPro"/>
</dbReference>
<dbReference type="GO" id="GO:0005886">
    <property type="term" value="C:plasma membrane"/>
    <property type="evidence" value="ECO:0007669"/>
    <property type="project" value="UniProtKB-SubCell"/>
</dbReference>
<dbReference type="GO" id="GO:0051539">
    <property type="term" value="F:4 iron, 4 sulfur cluster binding"/>
    <property type="evidence" value="ECO:0007669"/>
    <property type="project" value="UniProtKB-KW"/>
</dbReference>
<dbReference type="GO" id="GO:0009055">
    <property type="term" value="F:electron transfer activity"/>
    <property type="evidence" value="ECO:0007669"/>
    <property type="project" value="TreeGrafter"/>
</dbReference>
<dbReference type="GO" id="GO:0046872">
    <property type="term" value="F:metal ion binding"/>
    <property type="evidence" value="ECO:0007669"/>
    <property type="project" value="UniProtKB-KW"/>
</dbReference>
<dbReference type="GO" id="GO:0160182">
    <property type="term" value="F:nitrate reductase (quinone) activity"/>
    <property type="evidence" value="ECO:0007669"/>
    <property type="project" value="UniProtKB-EC"/>
</dbReference>
<dbReference type="GO" id="GO:0009061">
    <property type="term" value="P:anaerobic respiration"/>
    <property type="evidence" value="ECO:0007669"/>
    <property type="project" value="InterPro"/>
</dbReference>
<dbReference type="GO" id="GO:0042128">
    <property type="term" value="P:nitrate assimilation"/>
    <property type="evidence" value="ECO:0007669"/>
    <property type="project" value="UniProtKB-KW"/>
</dbReference>
<dbReference type="CDD" id="cd10555">
    <property type="entry name" value="EBDH_beta"/>
    <property type="match status" value="1"/>
</dbReference>
<dbReference type="Gene3D" id="3.30.70.20">
    <property type="match status" value="3"/>
</dbReference>
<dbReference type="InterPro" id="IPR017896">
    <property type="entry name" value="4Fe4S_Fe-S-bd"/>
</dbReference>
<dbReference type="InterPro" id="IPR017839">
    <property type="entry name" value="DMSO_Rdtase_II_Fe-S_su"/>
</dbReference>
<dbReference type="NCBIfam" id="TIGR03478">
    <property type="entry name" value="DMSO_red_II_bet"/>
    <property type="match status" value="1"/>
</dbReference>
<dbReference type="PANTHER" id="PTHR43518">
    <property type="entry name" value="NITRATE REDUCTASE BETA SUBUNIT"/>
    <property type="match status" value="1"/>
</dbReference>
<dbReference type="PANTHER" id="PTHR43518:SF1">
    <property type="entry name" value="RESPIRATORY NITRATE REDUCTASE 1 BETA CHAIN"/>
    <property type="match status" value="1"/>
</dbReference>
<dbReference type="Pfam" id="PF13247">
    <property type="entry name" value="Fer4_11"/>
    <property type="match status" value="1"/>
</dbReference>
<dbReference type="SUPFAM" id="SSF54862">
    <property type="entry name" value="4Fe-4S ferredoxins"/>
    <property type="match status" value="1"/>
</dbReference>
<dbReference type="PROSITE" id="PS51379">
    <property type="entry name" value="4FE4S_FER_2"/>
    <property type="match status" value="3"/>
</dbReference>
<reference key="1">
    <citation type="journal article" date="2004" name="Biochim. Biophys. Acta">
        <title>Respiratory nitrate reductase from haloarchaeon Haloferax mediterranei: biochemical and genetic analysis.</title>
        <authorList>
            <person name="Lledo B."/>
            <person name="Martinez-Espinosa R.M."/>
            <person name="Marhuenda-Egea F.C."/>
            <person name="Bonete M.J."/>
        </authorList>
    </citation>
    <scope>NUCLEOTIDE SEQUENCE [GENOMIC DNA]</scope>
    <scope>FUNCTION</scope>
    <scope>CATALYTIC ACTIVITY</scope>
    <scope>SUBUNIT</scope>
    <scope>INDUCTION</scope>
    <scope>SUBCELLULAR LOCATION</scope>
    <scope>BIOPHYSICOCHEMICAL PROPERTIES</scope>
    <source>
        <strain>ATCC 33500 / DSM 1411 / JCM 8866 / NBRC 14739 / NCIMB 2177 / R-4</strain>
    </source>
</reference>
<reference key="2">
    <citation type="journal article" date="2012" name="J. Bacteriol.">
        <title>Complete genome sequence of the metabolically versatile halophilic archaeon Haloferax mediterranei, a poly(3-hydroxybutyrate-co-3-hydroxyvalerate) producer.</title>
        <authorList>
            <person name="Han J."/>
            <person name="Zhang F."/>
            <person name="Hou J."/>
            <person name="Liu X."/>
            <person name="Li M."/>
            <person name="Liu H."/>
            <person name="Cai L."/>
            <person name="Zhang B."/>
            <person name="Chen Y."/>
            <person name="Zhou J."/>
            <person name="Hu S."/>
            <person name="Xiang H."/>
        </authorList>
    </citation>
    <scope>NUCLEOTIDE SEQUENCE [LARGE SCALE GENOMIC DNA]</scope>
    <source>
        <strain>ATCC 33500 / DSM 1411 / JCM 8866 / NBRC 14739 / NCIMB 2177 / R-4</strain>
    </source>
</reference>
<reference key="3">
    <citation type="journal article" date="2014" name="PLoS Genet.">
        <title>Phylogenetically driven sequencing of extremely halophilic archaea reveals strategies for static and dynamic osmo-response.</title>
        <authorList>
            <person name="Becker E.A."/>
            <person name="Seitzer P.M."/>
            <person name="Tritt A."/>
            <person name="Larsen D."/>
            <person name="Krusor M."/>
            <person name="Yao A.I."/>
            <person name="Wu D."/>
            <person name="Madern D."/>
            <person name="Eisen J.A."/>
            <person name="Darling A.E."/>
            <person name="Facciotti M.T."/>
        </authorList>
    </citation>
    <scope>NUCLEOTIDE SEQUENCE [LARGE SCALE GENOMIC DNA]</scope>
    <source>
        <strain>ATCC 33500 / DSM 1411 / JCM 8866 / NBRC 14739 / NCIMB 2177 / R-4</strain>
    </source>
</reference>
<reference key="4">
    <citation type="journal article" date="2007" name="FEMS Microbiol. Lett.">
        <title>Look on the positive side! The orientation, identification and bioenergetics of 'Archaeal' membrane-bound nitrate reductases.</title>
        <authorList>
            <person name="Martinez-Espinosa R.M."/>
            <person name="Dridge E.J."/>
            <person name="Bonete M.J."/>
            <person name="Butt J.N."/>
            <person name="Butler C.S."/>
            <person name="Sargent F."/>
            <person name="Richardson D.J."/>
        </authorList>
    </citation>
    <scope>ACTIVITY REGULATION</scope>
    <scope>SUBCELLULAR LOCATION</scope>
    <scope>SUBUNIT</scope>
    <scope>PUTATIVE REACTION MECHANISM</scope>
</reference>
<keyword id="KW-0004">4Fe-4S</keyword>
<keyword id="KW-1003">Cell membrane</keyword>
<keyword id="KW-0249">Electron transport</keyword>
<keyword id="KW-0408">Iron</keyword>
<keyword id="KW-0411">Iron-sulfur</keyword>
<keyword id="KW-0472">Membrane</keyword>
<keyword id="KW-0479">Metal-binding</keyword>
<keyword id="KW-0534">Nitrate assimilation</keyword>
<keyword id="KW-0560">Oxidoreductase</keyword>
<keyword id="KW-0614">Plasmid</keyword>
<keyword id="KW-0677">Repeat</keyword>
<keyword id="KW-0813">Transport</keyword>
<gene>
    <name type="primary">narH</name>
    <name type="ordered locus">HFX_5103</name>
    <name type="ORF">C439_00695</name>
</gene>
<accession>I3R9M8</accession>
<accession>Q703H5</accession>
<organism>
    <name type="scientific">Haloferax mediterranei (strain ATCC 33500 / DSM 1411 / JCM 8866 / NBRC 14739 / NCIMB 2177 / R-4)</name>
    <name type="common">Halobacterium mediterranei</name>
    <dbReference type="NCBI Taxonomy" id="523841"/>
    <lineage>
        <taxon>Archaea</taxon>
        <taxon>Methanobacteriati</taxon>
        <taxon>Methanobacteriota</taxon>
        <taxon>Stenosarchaea group</taxon>
        <taxon>Halobacteria</taxon>
        <taxon>Halobacteriales</taxon>
        <taxon>Haloferacaceae</taxon>
        <taxon>Haloferax</taxon>
    </lineage>
</organism>
<evidence type="ECO:0000250" key="1">
    <source>
        <dbReference type="UniProtKB" id="P11349"/>
    </source>
</evidence>
<evidence type="ECO:0000255" key="2">
    <source>
        <dbReference type="PROSITE-ProRule" id="PRU00711"/>
    </source>
</evidence>
<evidence type="ECO:0000256" key="3">
    <source>
        <dbReference type="SAM" id="MobiDB-lite"/>
    </source>
</evidence>
<evidence type="ECO:0000269" key="4">
    <source>
    </source>
</evidence>
<evidence type="ECO:0000269" key="5">
    <source>
    </source>
</evidence>
<evidence type="ECO:0000305" key="6"/>
<evidence type="ECO:0000305" key="7">
    <source>
    </source>
</evidence>
<evidence type="ECO:0000305" key="8">
    <source>
    </source>
</evidence>
<name>NARH_HALMT</name>
<comment type="function">
    <text evidence="4">The respiratory membrane-bound nitrate reductase enzyme complex plays a role in generation of metabolic energy by using nitrate as a terminal electron acceptor during anaerobic conditions. The beta chain is an electron transfer unit containing four cysteine clusters involved in the formation of iron-sulfur centers.</text>
</comment>
<comment type="catalytic activity">
    <reaction evidence="4">
        <text>nitrate + a quinol = a quinone + nitrite + H2O</text>
        <dbReference type="Rhea" id="RHEA:56144"/>
        <dbReference type="ChEBI" id="CHEBI:15377"/>
        <dbReference type="ChEBI" id="CHEBI:16301"/>
        <dbReference type="ChEBI" id="CHEBI:17632"/>
        <dbReference type="ChEBI" id="CHEBI:24646"/>
        <dbReference type="ChEBI" id="CHEBI:132124"/>
        <dbReference type="EC" id="1.7.5.1"/>
    </reaction>
</comment>
<comment type="cofactor">
    <cofactor evidence="1">
        <name>[4Fe-4S] cluster</name>
        <dbReference type="ChEBI" id="CHEBI:49883"/>
    </cofactor>
    <text evidence="1">Binds 3 [4Fe-4S] clusters per subunit.</text>
</comment>
<comment type="cofactor">
    <cofactor evidence="1">
        <name>[3Fe-4S] cluster</name>
        <dbReference type="ChEBI" id="CHEBI:21137"/>
    </cofactor>
    <text evidence="1">Binds 1 [3Fe-4S] cluster per subunit.</text>
</comment>
<comment type="activity regulation">
    <text evidence="5">Inhibited by cyanide, azide and antimycin A. Enzyme stability is not dependent on salt concentration.</text>
</comment>
<comment type="biophysicochemical properties">
    <kinetics>
        <KM evidence="4">0.82 mM for nitrate</KM>
        <KM evidence="4">0.25 mM for methyl viologen</KM>
        <text>Characterized with purified enzyme corresponding to a dimer of NarG and NarH.</text>
    </kinetics>
    <phDependence>
        <text evidence="4">Optimum pH is 8.2. At 40 degrees Celsius (temperature of natural environment) the optimum pH is 7.9.</text>
    </phDependence>
    <temperatureDependence>
        <text evidence="4">Optimum temperature is 70 degrees Celsius.</text>
    </temperatureDependence>
</comment>
<comment type="subunit">
    <text evidence="4 5">Probable multiprotein complex; a catalytic heterodimer of an alpha and beta chain is proposed to associate with additional subunits involved in membrane attachment and electron transfer.</text>
</comment>
<comment type="subcellular location">
    <subcellularLocation>
        <location evidence="7 8">Cell membrane</location>
        <topology evidence="4 5">Peripheral membrane protein</topology>
        <orientation evidence="4 5">Extracellular side</orientation>
    </subcellularLocation>
    <text>Proposed to be coexported with the Tat system-dependent alpha subunit.</text>
</comment>
<comment type="induction">
    <text evidence="4">By nitrate.</text>
</comment>
<proteinExistence type="evidence at protein level"/>
<feature type="chain" id="PRO_0000428887" description="Respiratory nitrate reductase subunit beta">
    <location>
        <begin position="1"/>
        <end position="352"/>
    </location>
</feature>
<feature type="domain" description="4Fe-4S ferredoxin-type 1" evidence="2">
    <location>
        <begin position="20"/>
        <end position="48"/>
    </location>
</feature>
<feature type="domain" description="4Fe-4S ferredoxin-type 2" evidence="2">
    <location>
        <begin position="139"/>
        <end position="170"/>
    </location>
</feature>
<feature type="domain" description="4Fe-4S ferredoxin-type 3" evidence="2">
    <location>
        <begin position="172"/>
        <end position="201"/>
    </location>
</feature>
<feature type="region of interest" description="Disordered" evidence="3">
    <location>
        <begin position="63"/>
        <end position="95"/>
    </location>
</feature>
<feature type="region of interest" description="Disordered" evidence="3">
    <location>
        <begin position="111"/>
        <end position="131"/>
    </location>
</feature>
<feature type="compositionally biased region" description="Basic and acidic residues" evidence="3">
    <location>
        <begin position="78"/>
        <end position="95"/>
    </location>
</feature>
<feature type="binding site" evidence="1">
    <location>
        <position position="29"/>
    </location>
    <ligand>
        <name>[4Fe-4S] cluster</name>
        <dbReference type="ChEBI" id="CHEBI:49883"/>
        <label>1</label>
    </ligand>
</feature>
<feature type="binding site" evidence="1">
    <location>
        <position position="32"/>
    </location>
    <ligand>
        <name>[4Fe-4S] cluster</name>
        <dbReference type="ChEBI" id="CHEBI:49883"/>
        <label>1</label>
    </ligand>
</feature>
<feature type="binding site" evidence="1">
    <location>
        <position position="35"/>
    </location>
    <ligand>
        <name>[4Fe-4S] cluster</name>
        <dbReference type="ChEBI" id="CHEBI:49883"/>
        <label>1</label>
    </ligand>
</feature>
<feature type="binding site" evidence="1">
    <location>
        <position position="39"/>
    </location>
    <ligand>
        <name>[4Fe-4S] cluster</name>
        <dbReference type="ChEBI" id="CHEBI:49883"/>
        <label>2</label>
    </ligand>
</feature>
<feature type="binding site" evidence="1">
    <location>
        <position position="148"/>
    </location>
    <ligand>
        <name>[4Fe-4S] cluster</name>
        <dbReference type="ChEBI" id="CHEBI:49883"/>
        <label>3</label>
    </ligand>
</feature>
<feature type="binding site" evidence="1">
    <location>
        <position position="151"/>
    </location>
    <ligand>
        <name>[4Fe-4S] cluster</name>
        <dbReference type="ChEBI" id="CHEBI:49883"/>
        <label>3</label>
    </ligand>
</feature>
<feature type="binding site" evidence="1">
    <location>
        <position position="156"/>
    </location>
    <ligand>
        <name>[4Fe-4S] cluster</name>
        <dbReference type="ChEBI" id="CHEBI:49883"/>
        <label>3</label>
    </ligand>
</feature>
<feature type="binding site" evidence="1">
    <location>
        <position position="160"/>
    </location>
    <ligand>
        <name>[3Fe-4S] cluster</name>
        <dbReference type="ChEBI" id="CHEBI:21137"/>
    </ligand>
</feature>
<feature type="binding site" evidence="1">
    <location>
        <position position="181"/>
    </location>
    <ligand>
        <name>[3Fe-4S] cluster</name>
        <dbReference type="ChEBI" id="CHEBI:21137"/>
    </ligand>
</feature>
<feature type="binding site" evidence="1">
    <location>
        <position position="187"/>
    </location>
    <ligand>
        <name>[3Fe-4S] cluster</name>
        <dbReference type="ChEBI" id="CHEBI:21137"/>
    </ligand>
</feature>
<feature type="binding site" evidence="1">
    <location>
        <position position="191"/>
    </location>
    <ligand>
        <name>[4Fe-4S] cluster</name>
        <dbReference type="ChEBI" id="CHEBI:49883"/>
        <label>3</label>
    </ligand>
</feature>
<feature type="binding site" evidence="1">
    <location>
        <position position="208"/>
    </location>
    <ligand>
        <name>[4Fe-4S] cluster</name>
        <dbReference type="ChEBI" id="CHEBI:49883"/>
        <label>2</label>
    </ligand>
</feature>
<feature type="binding site" evidence="1">
    <location>
        <position position="211"/>
    </location>
    <ligand>
        <name>[4Fe-4S] cluster</name>
        <dbReference type="ChEBI" id="CHEBI:49883"/>
        <label>2</label>
    </ligand>
</feature>
<feature type="binding site" evidence="1">
    <location>
        <position position="229"/>
    </location>
    <ligand>
        <name>[4Fe-4S] cluster</name>
        <dbReference type="ChEBI" id="CHEBI:49883"/>
        <label>2</label>
    </ligand>
</feature>
<feature type="binding site" evidence="1">
    <location>
        <position position="233"/>
    </location>
    <ligand>
        <name>[4Fe-4S] cluster</name>
        <dbReference type="ChEBI" id="CHEBI:49883"/>
        <label>1</label>
    </ligand>
</feature>
<feature type="sequence conflict" description="In Ref. 1; CAF21907." evidence="6" ref="1">
    <original>G</original>
    <variation>C</variation>
    <location>
        <position position="132"/>
    </location>
</feature>
<feature type="sequence conflict" description="In Ref. 1; CAF21907." evidence="6" ref="1">
    <original>EAC</original>
    <variation>GSL</variation>
    <location>
        <begin position="158"/>
        <end position="160"/>
    </location>
</feature>
<feature type="sequence conflict" description="In Ref. 1; CAF21907." evidence="6" ref="1">
    <original>DT</original>
    <variation>RH</variation>
    <location>
        <begin position="314"/>
        <end position="315"/>
    </location>
</feature>
<feature type="sequence conflict" description="In Ref. 1; CAF21907." evidence="6" ref="1">
    <original>VN</original>
    <variation>SH</variation>
    <location>
        <begin position="323"/>
        <end position="324"/>
    </location>
</feature>
<sequence>MSTDSDAETVDLADGVDHQVAMVMDLNKCIGCQTCTVACKSLWTEGGGRDYMYWNNVETKPGKGYPRNWEESGGGWKSSEHKERKPGQIPDKEDYGDAWEFNHEEIMYNGSDRPLRPDSDPEWGPNWDEDQGTGEYPNSYYFYLPRICNHCTHPSCVEACPRKAIYKREEDGIVLIDQERCRGYRYCVEGCPYKKVYYNATQKTSEKCIFCYPRIEGEGPDGKTFAPACAEDCPPQLRLVGFLDDEQGPIHKLVEEYEVALPLHPEYQTQPNVYYIPPFAPPQHSEDGESVDVDRIPRNYLEELFGERVHDALDTIEREREKVNRGGGSELLDMLTDTNPARKFRLEVFDDD</sequence>
<protein>
    <recommendedName>
        <fullName>Respiratory nitrate reductase subunit beta</fullName>
        <ecNumber evidence="4">1.7.5.1</ecNumber>
    </recommendedName>
    <alternativeName>
        <fullName>Nitrate reductase beta chain</fullName>
    </alternativeName>
</protein>